<protein>
    <recommendedName>
        <fullName evidence="1">Flavin-dependent thymidylate synthase</fullName>
        <shortName evidence="1">FDTS</shortName>
        <ecNumber evidence="1">2.1.1.148</ecNumber>
    </recommendedName>
    <alternativeName>
        <fullName evidence="1">FAD-dependent thymidylate synthase</fullName>
    </alternativeName>
    <alternativeName>
        <fullName evidence="1">Thymidylate synthase ThyX</fullName>
        <shortName evidence="1">TS</shortName>
        <shortName evidence="1">TSase</shortName>
    </alternativeName>
</protein>
<comment type="function">
    <text evidence="1">Catalyzes the reductive methylation of 2'-deoxyuridine-5'-monophosphate (dUMP) to 2'-deoxythymidine-5'-monophosphate (dTMP) while utilizing 5,10-methylenetetrahydrofolate (mTHF) as the methyl donor, and NADPH and FADH(2) as the reductant.</text>
</comment>
<comment type="catalytic activity">
    <reaction evidence="1">
        <text>dUMP + (6R)-5,10-methylene-5,6,7,8-tetrahydrofolate + NADPH + H(+) = dTMP + (6S)-5,6,7,8-tetrahydrofolate + NADP(+)</text>
        <dbReference type="Rhea" id="RHEA:29043"/>
        <dbReference type="ChEBI" id="CHEBI:15378"/>
        <dbReference type="ChEBI" id="CHEBI:15636"/>
        <dbReference type="ChEBI" id="CHEBI:57453"/>
        <dbReference type="ChEBI" id="CHEBI:57783"/>
        <dbReference type="ChEBI" id="CHEBI:58349"/>
        <dbReference type="ChEBI" id="CHEBI:63528"/>
        <dbReference type="ChEBI" id="CHEBI:246422"/>
        <dbReference type="EC" id="2.1.1.148"/>
    </reaction>
</comment>
<comment type="cofactor">
    <cofactor evidence="1">
        <name>FAD</name>
        <dbReference type="ChEBI" id="CHEBI:57692"/>
    </cofactor>
    <text evidence="1">Binds 4 FAD per tetramer. Each FAD binding site is formed by three monomers.</text>
</comment>
<comment type="pathway">
    <text evidence="1">Pyrimidine metabolism; dTTP biosynthesis.</text>
</comment>
<comment type="subunit">
    <text evidence="1">Homotetramer.</text>
</comment>
<comment type="similarity">
    <text evidence="1">Belongs to the thymidylate synthase ThyX family.</text>
</comment>
<keyword id="KW-0274">FAD</keyword>
<keyword id="KW-0285">Flavoprotein</keyword>
<keyword id="KW-0489">Methyltransferase</keyword>
<keyword id="KW-0521">NADP</keyword>
<keyword id="KW-0545">Nucleotide biosynthesis</keyword>
<keyword id="KW-1185">Reference proteome</keyword>
<keyword id="KW-0808">Transferase</keyword>
<reference key="1">
    <citation type="submission" date="2009-06" db="EMBL/GenBank/DDBJ databases">
        <title>Complete sequence of Thermotogales bacterium TBF 19.5.1.</title>
        <authorList>
            <consortium name="US DOE Joint Genome Institute"/>
            <person name="Lucas S."/>
            <person name="Copeland A."/>
            <person name="Lapidus A."/>
            <person name="Glavina del Rio T."/>
            <person name="Tice H."/>
            <person name="Bruce D."/>
            <person name="Goodwin L."/>
            <person name="Pitluck S."/>
            <person name="Chertkov O."/>
            <person name="Brettin T."/>
            <person name="Detter J.C."/>
            <person name="Han C."/>
            <person name="Schmutz J."/>
            <person name="Larimer F."/>
            <person name="Land M."/>
            <person name="Hauser L."/>
            <person name="Kyrpides N."/>
            <person name="Ovchinnikova G."/>
            <person name="Noll K."/>
        </authorList>
    </citation>
    <scope>NUCLEOTIDE SEQUENCE [LARGE SCALE GENOMIC DNA]</scope>
    <source>
        <strain>ATCC BAA-1733 / DSM 21960 / TBF 19.5.1</strain>
    </source>
</reference>
<dbReference type="EC" id="2.1.1.148" evidence="1"/>
<dbReference type="EMBL" id="CP001634">
    <property type="protein sequence ID" value="ACR78757.1"/>
    <property type="molecule type" value="Genomic_DNA"/>
</dbReference>
<dbReference type="RefSeq" id="WP_012744545.1">
    <property type="nucleotide sequence ID" value="NC_012785.1"/>
</dbReference>
<dbReference type="SMR" id="C5CHB8"/>
<dbReference type="STRING" id="521045.Kole_0028"/>
<dbReference type="KEGG" id="kol:Kole_0028"/>
<dbReference type="eggNOG" id="COG1351">
    <property type="taxonomic scope" value="Bacteria"/>
</dbReference>
<dbReference type="HOGENOM" id="CLU_067790_0_0_0"/>
<dbReference type="OrthoDB" id="9774464at2"/>
<dbReference type="UniPathway" id="UPA00575"/>
<dbReference type="Proteomes" id="UP000002382">
    <property type="component" value="Chromosome"/>
</dbReference>
<dbReference type="GO" id="GO:0050660">
    <property type="term" value="F:flavin adenine dinucleotide binding"/>
    <property type="evidence" value="ECO:0007669"/>
    <property type="project" value="InterPro"/>
</dbReference>
<dbReference type="GO" id="GO:0070402">
    <property type="term" value="F:NADPH binding"/>
    <property type="evidence" value="ECO:0007669"/>
    <property type="project" value="TreeGrafter"/>
</dbReference>
<dbReference type="GO" id="GO:0050797">
    <property type="term" value="F:thymidylate synthase (FAD) activity"/>
    <property type="evidence" value="ECO:0007669"/>
    <property type="project" value="UniProtKB-UniRule"/>
</dbReference>
<dbReference type="GO" id="GO:0004799">
    <property type="term" value="F:thymidylate synthase activity"/>
    <property type="evidence" value="ECO:0007669"/>
    <property type="project" value="TreeGrafter"/>
</dbReference>
<dbReference type="GO" id="GO:0006231">
    <property type="term" value="P:dTMP biosynthetic process"/>
    <property type="evidence" value="ECO:0007669"/>
    <property type="project" value="UniProtKB-UniRule"/>
</dbReference>
<dbReference type="GO" id="GO:0006235">
    <property type="term" value="P:dTTP biosynthetic process"/>
    <property type="evidence" value="ECO:0007669"/>
    <property type="project" value="UniProtKB-UniRule"/>
</dbReference>
<dbReference type="GO" id="GO:0032259">
    <property type="term" value="P:methylation"/>
    <property type="evidence" value="ECO:0007669"/>
    <property type="project" value="UniProtKB-KW"/>
</dbReference>
<dbReference type="CDD" id="cd20175">
    <property type="entry name" value="ThyX"/>
    <property type="match status" value="1"/>
</dbReference>
<dbReference type="Gene3D" id="3.30.1360.170">
    <property type="match status" value="1"/>
</dbReference>
<dbReference type="HAMAP" id="MF_01408">
    <property type="entry name" value="ThyX"/>
    <property type="match status" value="1"/>
</dbReference>
<dbReference type="InterPro" id="IPR003669">
    <property type="entry name" value="Thymidylate_synthase_ThyX"/>
</dbReference>
<dbReference type="InterPro" id="IPR036098">
    <property type="entry name" value="Thymidylate_synthase_ThyX_sf"/>
</dbReference>
<dbReference type="NCBIfam" id="TIGR02170">
    <property type="entry name" value="thyX"/>
    <property type="match status" value="1"/>
</dbReference>
<dbReference type="PANTHER" id="PTHR34934">
    <property type="entry name" value="FLAVIN-DEPENDENT THYMIDYLATE SYNTHASE"/>
    <property type="match status" value="1"/>
</dbReference>
<dbReference type="PANTHER" id="PTHR34934:SF1">
    <property type="entry name" value="FLAVIN-DEPENDENT THYMIDYLATE SYNTHASE"/>
    <property type="match status" value="1"/>
</dbReference>
<dbReference type="Pfam" id="PF02511">
    <property type="entry name" value="Thy1"/>
    <property type="match status" value="1"/>
</dbReference>
<dbReference type="SUPFAM" id="SSF69796">
    <property type="entry name" value="Thymidylate synthase-complementing protein Thy1"/>
    <property type="match status" value="1"/>
</dbReference>
<dbReference type="PROSITE" id="PS51331">
    <property type="entry name" value="THYX"/>
    <property type="match status" value="1"/>
</dbReference>
<proteinExistence type="inferred from homology"/>
<name>THYX_KOSOT</name>
<sequence length="230" mass="26912">MEIKVLEKGFIRLVEVMGDDFSAVQAARVSYGKGLTTPERDKKLIFYLMEHGHHSPFEHIIFKFHIKLPIFVMRQLVRHRIASINERSGRYTEFSDEWYIPERIRTPDKVNRQGSVFVDDDDLNSEGIRLIEETIEKTYQAYKRLLEMGVARELARIVLPTSMYTECYWTINARSMMNFLNLRADSHAQYEMQQYALAVAKIFKSKCPVTYEAFLNFAYTGDLLKTEGCL</sequence>
<evidence type="ECO:0000255" key="1">
    <source>
        <dbReference type="HAMAP-Rule" id="MF_01408"/>
    </source>
</evidence>
<evidence type="ECO:0000255" key="2">
    <source>
        <dbReference type="PROSITE-ProRule" id="PRU00661"/>
    </source>
</evidence>
<gene>
    <name evidence="1" type="primary">thyX</name>
    <name type="ordered locus">Kole_0028</name>
</gene>
<accession>C5CHB8</accession>
<organism>
    <name type="scientific">Kosmotoga olearia (strain ATCC BAA-1733 / DSM 21960 / TBF 19.5.1)</name>
    <dbReference type="NCBI Taxonomy" id="521045"/>
    <lineage>
        <taxon>Bacteria</taxon>
        <taxon>Thermotogati</taxon>
        <taxon>Thermotogota</taxon>
        <taxon>Thermotogae</taxon>
        <taxon>Kosmotogales</taxon>
        <taxon>Kosmotogaceae</taxon>
        <taxon>Kosmotoga</taxon>
    </lineage>
</organism>
<feature type="chain" id="PRO_1000215212" description="Flavin-dependent thymidylate synthase">
    <location>
        <begin position="1"/>
        <end position="230"/>
    </location>
</feature>
<feature type="domain" description="ThyX" evidence="2">
    <location>
        <begin position="1"/>
        <end position="217"/>
    </location>
</feature>
<feature type="short sequence motif" description="ThyX motif" evidence="1">
    <location>
        <begin position="78"/>
        <end position="88"/>
    </location>
</feature>
<feature type="active site" description="Involved in ionization of N3 of dUMP, leading to its activation" evidence="1">
    <location>
        <position position="183"/>
    </location>
</feature>
<feature type="binding site" evidence="1">
    <location>
        <position position="55"/>
    </location>
    <ligand>
        <name>FAD</name>
        <dbReference type="ChEBI" id="CHEBI:57692"/>
        <note>ligand shared between neighboring subunits</note>
    </ligand>
</feature>
<feature type="binding site" evidence="1">
    <location>
        <begin position="75"/>
        <end position="78"/>
    </location>
    <ligand>
        <name>dUMP</name>
        <dbReference type="ChEBI" id="CHEBI:246422"/>
        <note>ligand shared between dimeric partners</note>
    </ligand>
</feature>
<feature type="binding site" evidence="1">
    <location>
        <begin position="78"/>
        <end position="80"/>
    </location>
    <ligand>
        <name>FAD</name>
        <dbReference type="ChEBI" id="CHEBI:57692"/>
        <note>ligand shared between neighboring subunits</note>
    </ligand>
</feature>
<feature type="binding site" description="in other chain" evidence="1">
    <location>
        <begin position="86"/>
        <end position="90"/>
    </location>
    <ligand>
        <name>dUMP</name>
        <dbReference type="ChEBI" id="CHEBI:246422"/>
        <note>ligand shared between dimeric partners</note>
    </ligand>
</feature>
<feature type="binding site" evidence="1">
    <location>
        <position position="86"/>
    </location>
    <ligand>
        <name>FAD</name>
        <dbReference type="ChEBI" id="CHEBI:57692"/>
        <note>ligand shared between neighboring subunits</note>
    </ligand>
</feature>
<feature type="binding site" description="in other chain" evidence="1">
    <location>
        <position position="156"/>
    </location>
    <ligand>
        <name>dUMP</name>
        <dbReference type="ChEBI" id="CHEBI:246422"/>
        <note>ligand shared between dimeric partners</note>
    </ligand>
</feature>
<feature type="binding site" evidence="1">
    <location>
        <begin position="172"/>
        <end position="174"/>
    </location>
    <ligand>
        <name>FAD</name>
        <dbReference type="ChEBI" id="CHEBI:57692"/>
        <note>ligand shared between neighboring subunits</note>
    </ligand>
</feature>
<feature type="binding site" evidence="1">
    <location>
        <position position="178"/>
    </location>
    <ligand>
        <name>FAD</name>
        <dbReference type="ChEBI" id="CHEBI:57692"/>
        <note>ligand shared between neighboring subunits</note>
    </ligand>
</feature>
<feature type="binding site" evidence="1">
    <location>
        <position position="183"/>
    </location>
    <ligand>
        <name>dUMP</name>
        <dbReference type="ChEBI" id="CHEBI:246422"/>
        <note>ligand shared between dimeric partners</note>
    </ligand>
</feature>